<accession>Q9BYU1</accession>
<accession>A5D8Y0</accession>
<accession>B3KUK9</accession>
<keyword id="KW-0010">Activator</keyword>
<keyword id="KW-0238">DNA-binding</keyword>
<keyword id="KW-0371">Homeobox</keyword>
<keyword id="KW-0539">Nucleus</keyword>
<keyword id="KW-1267">Proteomics identification</keyword>
<keyword id="KW-1185">Reference proteome</keyword>
<keyword id="KW-0804">Transcription</keyword>
<keyword id="KW-0805">Transcription regulation</keyword>
<organism>
    <name type="scientific">Homo sapiens</name>
    <name type="common">Human</name>
    <dbReference type="NCBI Taxonomy" id="9606"/>
    <lineage>
        <taxon>Eukaryota</taxon>
        <taxon>Metazoa</taxon>
        <taxon>Chordata</taxon>
        <taxon>Craniata</taxon>
        <taxon>Vertebrata</taxon>
        <taxon>Euteleostomi</taxon>
        <taxon>Mammalia</taxon>
        <taxon>Eutheria</taxon>
        <taxon>Euarchontoglires</taxon>
        <taxon>Primates</taxon>
        <taxon>Haplorrhini</taxon>
        <taxon>Catarrhini</taxon>
        <taxon>Hominidae</taxon>
        <taxon>Homo</taxon>
    </lineage>
</organism>
<gene>
    <name type="primary">PBX4</name>
</gene>
<evidence type="ECO:0000255" key="1">
    <source>
        <dbReference type="PROSITE-ProRule" id="PRU00108"/>
    </source>
</evidence>
<evidence type="ECO:0000255" key="2">
    <source>
        <dbReference type="PROSITE-ProRule" id="PRU01322"/>
    </source>
</evidence>
<evidence type="ECO:0000256" key="3">
    <source>
        <dbReference type="SAM" id="MobiDB-lite"/>
    </source>
</evidence>
<evidence type="ECO:0000269" key="4">
    <source>
    </source>
</evidence>
<evidence type="ECO:0000305" key="5"/>
<dbReference type="EMBL" id="AK097427">
    <property type="protein sequence ID" value="BAG53471.1"/>
    <property type="molecule type" value="mRNA"/>
</dbReference>
<dbReference type="EMBL" id="BC033067">
    <property type="status" value="NOT_ANNOTATED_CDS"/>
    <property type="molecule type" value="mRNA"/>
</dbReference>
<dbReference type="EMBL" id="CH471106">
    <property type="protein sequence ID" value="EAW84835.1"/>
    <property type="molecule type" value="Genomic_DNA"/>
</dbReference>
<dbReference type="EMBL" id="BC141859">
    <property type="protein sequence ID" value="AAI41860.1"/>
    <property type="molecule type" value="mRNA"/>
</dbReference>
<dbReference type="EMBL" id="AJ300182">
    <property type="protein sequence ID" value="CAC28212.1"/>
    <property type="molecule type" value="mRNA"/>
</dbReference>
<dbReference type="CCDS" id="CCDS12406.1"/>
<dbReference type="RefSeq" id="NP_079521.1">
    <property type="nucleotide sequence ID" value="NM_025245.3"/>
</dbReference>
<dbReference type="SMR" id="Q9BYU1"/>
<dbReference type="BioGRID" id="123272">
    <property type="interactions" value="81"/>
</dbReference>
<dbReference type="FunCoup" id="Q9BYU1">
    <property type="interactions" value="391"/>
</dbReference>
<dbReference type="IntAct" id="Q9BYU1">
    <property type="interactions" value="82"/>
</dbReference>
<dbReference type="MINT" id="Q9BYU1"/>
<dbReference type="STRING" id="9606.ENSP00000251203"/>
<dbReference type="GlyGen" id="Q9BYU1">
    <property type="glycosylation" value="2 sites, 1 O-linked glycan (1 site)"/>
</dbReference>
<dbReference type="iPTMnet" id="Q9BYU1"/>
<dbReference type="PhosphoSitePlus" id="Q9BYU1"/>
<dbReference type="BioMuta" id="PBX4"/>
<dbReference type="DMDM" id="122065777"/>
<dbReference type="jPOST" id="Q9BYU1"/>
<dbReference type="MassIVE" id="Q9BYU1"/>
<dbReference type="PaxDb" id="9606-ENSP00000251203"/>
<dbReference type="PeptideAtlas" id="Q9BYU1"/>
<dbReference type="ProteomicsDB" id="79709"/>
<dbReference type="Antibodypedia" id="28510">
    <property type="antibodies" value="91 antibodies from 23 providers"/>
</dbReference>
<dbReference type="DNASU" id="80714"/>
<dbReference type="Ensembl" id="ENST00000251203.14">
    <property type="protein sequence ID" value="ENSP00000251203.5"/>
    <property type="gene ID" value="ENSG00000105717.14"/>
</dbReference>
<dbReference type="GeneID" id="80714"/>
<dbReference type="KEGG" id="hsa:80714"/>
<dbReference type="MANE-Select" id="ENST00000251203.14">
    <property type="protein sequence ID" value="ENSP00000251203.5"/>
    <property type="RefSeq nucleotide sequence ID" value="NM_025245.3"/>
    <property type="RefSeq protein sequence ID" value="NP_079521.1"/>
</dbReference>
<dbReference type="UCSC" id="uc002nmy.4">
    <property type="organism name" value="human"/>
</dbReference>
<dbReference type="AGR" id="HGNC:13403"/>
<dbReference type="CTD" id="80714"/>
<dbReference type="DisGeNET" id="80714"/>
<dbReference type="GeneCards" id="PBX4"/>
<dbReference type="HGNC" id="HGNC:13403">
    <property type="gene designation" value="PBX4"/>
</dbReference>
<dbReference type="HPA" id="ENSG00000105717">
    <property type="expression patterns" value="Tissue enhanced (testis, thyroid gland)"/>
</dbReference>
<dbReference type="MIM" id="608127">
    <property type="type" value="gene"/>
</dbReference>
<dbReference type="neXtProt" id="NX_Q9BYU1"/>
<dbReference type="OpenTargets" id="ENSG00000105717"/>
<dbReference type="PharmGKB" id="PA32973"/>
<dbReference type="VEuPathDB" id="HostDB:ENSG00000105717"/>
<dbReference type="eggNOG" id="KOG0774">
    <property type="taxonomic scope" value="Eukaryota"/>
</dbReference>
<dbReference type="GeneTree" id="ENSGT00940000162643"/>
<dbReference type="HOGENOM" id="CLU_041153_1_0_1"/>
<dbReference type="InParanoid" id="Q9BYU1"/>
<dbReference type="OMA" id="IYMGKTA"/>
<dbReference type="OrthoDB" id="4187154at2759"/>
<dbReference type="PAN-GO" id="Q9BYU1">
    <property type="GO annotations" value="8 GO annotations based on evolutionary models"/>
</dbReference>
<dbReference type="PhylomeDB" id="Q9BYU1"/>
<dbReference type="TreeFam" id="TF314340"/>
<dbReference type="PathwayCommons" id="Q9BYU1"/>
<dbReference type="SignaLink" id="Q9BYU1"/>
<dbReference type="SIGNOR" id="Q9BYU1"/>
<dbReference type="BioGRID-ORCS" id="80714">
    <property type="hits" value="20 hits in 1168 CRISPR screens"/>
</dbReference>
<dbReference type="ChiTaRS" id="PBX4">
    <property type="organism name" value="human"/>
</dbReference>
<dbReference type="GenomeRNAi" id="80714"/>
<dbReference type="Pharos" id="Q9BYU1">
    <property type="development level" value="Tbio"/>
</dbReference>
<dbReference type="PRO" id="PR:Q9BYU1"/>
<dbReference type="Proteomes" id="UP000005640">
    <property type="component" value="Chromosome 19"/>
</dbReference>
<dbReference type="RNAct" id="Q9BYU1">
    <property type="molecule type" value="protein"/>
</dbReference>
<dbReference type="Bgee" id="ENSG00000105717">
    <property type="expression patterns" value="Expressed in right lobe of thyroid gland and 105 other cell types or tissues"/>
</dbReference>
<dbReference type="ExpressionAtlas" id="Q9BYU1">
    <property type="expression patterns" value="baseline and differential"/>
</dbReference>
<dbReference type="GO" id="GO:0000785">
    <property type="term" value="C:chromatin"/>
    <property type="evidence" value="ECO:0000247"/>
    <property type="project" value="NTNU_SB"/>
</dbReference>
<dbReference type="GO" id="GO:0005634">
    <property type="term" value="C:nucleus"/>
    <property type="evidence" value="ECO:0000305"/>
    <property type="project" value="BHF-UCL"/>
</dbReference>
<dbReference type="GO" id="GO:0001741">
    <property type="term" value="C:XY body"/>
    <property type="evidence" value="ECO:0007669"/>
    <property type="project" value="Ensembl"/>
</dbReference>
<dbReference type="GO" id="GO:0000981">
    <property type="term" value="F:DNA-binding transcription factor activity, RNA polymerase II-specific"/>
    <property type="evidence" value="ECO:0000247"/>
    <property type="project" value="NTNU_SB"/>
</dbReference>
<dbReference type="GO" id="GO:0043565">
    <property type="term" value="F:sequence-specific DNA binding"/>
    <property type="evidence" value="ECO:0000250"/>
    <property type="project" value="BHF-UCL"/>
</dbReference>
<dbReference type="GO" id="GO:0009887">
    <property type="term" value="P:animal organ morphogenesis"/>
    <property type="evidence" value="ECO:0000318"/>
    <property type="project" value="GO_Central"/>
</dbReference>
<dbReference type="GO" id="GO:0007420">
    <property type="term" value="P:brain development"/>
    <property type="evidence" value="ECO:0000318"/>
    <property type="project" value="GO_Central"/>
</dbReference>
<dbReference type="GO" id="GO:0048568">
    <property type="term" value="P:embryonic organ development"/>
    <property type="evidence" value="ECO:0000318"/>
    <property type="project" value="GO_Central"/>
</dbReference>
<dbReference type="GO" id="GO:0001654">
    <property type="term" value="P:eye development"/>
    <property type="evidence" value="ECO:0000318"/>
    <property type="project" value="GO_Central"/>
</dbReference>
<dbReference type="GO" id="GO:0048666">
    <property type="term" value="P:neuron development"/>
    <property type="evidence" value="ECO:0000318"/>
    <property type="project" value="GO_Central"/>
</dbReference>
<dbReference type="GO" id="GO:0045893">
    <property type="term" value="P:positive regulation of DNA-templated transcription"/>
    <property type="evidence" value="ECO:0000305"/>
    <property type="project" value="BHF-UCL"/>
</dbReference>
<dbReference type="CDD" id="cd00086">
    <property type="entry name" value="homeodomain"/>
    <property type="match status" value="1"/>
</dbReference>
<dbReference type="FunFam" id="1.10.10.60:FF:000008">
    <property type="entry name" value="Pre-B-cell leukemia transcription factor 1"/>
    <property type="match status" value="1"/>
</dbReference>
<dbReference type="Gene3D" id="1.10.10.60">
    <property type="entry name" value="Homeodomain-like"/>
    <property type="match status" value="1"/>
</dbReference>
<dbReference type="InterPro" id="IPR001356">
    <property type="entry name" value="HD"/>
</dbReference>
<dbReference type="InterPro" id="IPR009057">
    <property type="entry name" value="Homeodomain-like_sf"/>
</dbReference>
<dbReference type="InterPro" id="IPR008422">
    <property type="entry name" value="KN_HD"/>
</dbReference>
<dbReference type="InterPro" id="IPR005542">
    <property type="entry name" value="PBX_PBC_dom"/>
</dbReference>
<dbReference type="InterPro" id="IPR050224">
    <property type="entry name" value="TALE_homeobox"/>
</dbReference>
<dbReference type="PANTHER" id="PTHR11850">
    <property type="entry name" value="HOMEOBOX PROTEIN TRANSCRIPTION FACTORS"/>
    <property type="match status" value="1"/>
</dbReference>
<dbReference type="Pfam" id="PF05920">
    <property type="entry name" value="Homeobox_KN"/>
    <property type="match status" value="1"/>
</dbReference>
<dbReference type="Pfam" id="PF03792">
    <property type="entry name" value="PBC"/>
    <property type="match status" value="1"/>
</dbReference>
<dbReference type="SMART" id="SM00389">
    <property type="entry name" value="HOX"/>
    <property type="match status" value="1"/>
</dbReference>
<dbReference type="SUPFAM" id="SSF46689">
    <property type="entry name" value="Homeodomain-like"/>
    <property type="match status" value="1"/>
</dbReference>
<dbReference type="PROSITE" id="PS50071">
    <property type="entry name" value="HOMEOBOX_2"/>
    <property type="match status" value="1"/>
</dbReference>
<dbReference type="PROSITE" id="PS51978">
    <property type="entry name" value="PBC"/>
    <property type="match status" value="1"/>
</dbReference>
<protein>
    <recommendedName>
        <fullName>Pre-B-cell leukemia transcription factor 4</fullName>
    </recommendedName>
    <alternativeName>
        <fullName>Homeobox protein PBX4</fullName>
    </alternativeName>
</protein>
<name>PBX4_HUMAN</name>
<reference key="1">
    <citation type="journal article" date="2004" name="Nat. Genet.">
        <title>Complete sequencing and characterization of 21,243 full-length human cDNAs.</title>
        <authorList>
            <person name="Ota T."/>
            <person name="Suzuki Y."/>
            <person name="Nishikawa T."/>
            <person name="Otsuki T."/>
            <person name="Sugiyama T."/>
            <person name="Irie R."/>
            <person name="Wakamatsu A."/>
            <person name="Hayashi K."/>
            <person name="Sato H."/>
            <person name="Nagai K."/>
            <person name="Kimura K."/>
            <person name="Makita H."/>
            <person name="Sekine M."/>
            <person name="Obayashi M."/>
            <person name="Nishi T."/>
            <person name="Shibahara T."/>
            <person name="Tanaka T."/>
            <person name="Ishii S."/>
            <person name="Yamamoto J."/>
            <person name="Saito K."/>
            <person name="Kawai Y."/>
            <person name="Isono Y."/>
            <person name="Nakamura Y."/>
            <person name="Nagahari K."/>
            <person name="Murakami K."/>
            <person name="Yasuda T."/>
            <person name="Iwayanagi T."/>
            <person name="Wagatsuma M."/>
            <person name="Shiratori A."/>
            <person name="Sudo H."/>
            <person name="Hosoiri T."/>
            <person name="Kaku Y."/>
            <person name="Kodaira H."/>
            <person name="Kondo H."/>
            <person name="Sugawara M."/>
            <person name="Takahashi M."/>
            <person name="Kanda K."/>
            <person name="Yokoi T."/>
            <person name="Furuya T."/>
            <person name="Kikkawa E."/>
            <person name="Omura Y."/>
            <person name="Abe K."/>
            <person name="Kamihara K."/>
            <person name="Katsuta N."/>
            <person name="Sato K."/>
            <person name="Tanikawa M."/>
            <person name="Yamazaki M."/>
            <person name="Ninomiya K."/>
            <person name="Ishibashi T."/>
            <person name="Yamashita H."/>
            <person name="Murakawa K."/>
            <person name="Fujimori K."/>
            <person name="Tanai H."/>
            <person name="Kimata M."/>
            <person name="Watanabe M."/>
            <person name="Hiraoka S."/>
            <person name="Chiba Y."/>
            <person name="Ishida S."/>
            <person name="Ono Y."/>
            <person name="Takiguchi S."/>
            <person name="Watanabe S."/>
            <person name="Yosida M."/>
            <person name="Hotuta T."/>
            <person name="Kusano J."/>
            <person name="Kanehori K."/>
            <person name="Takahashi-Fujii A."/>
            <person name="Hara H."/>
            <person name="Tanase T.-O."/>
            <person name="Nomura Y."/>
            <person name="Togiya S."/>
            <person name="Komai F."/>
            <person name="Hara R."/>
            <person name="Takeuchi K."/>
            <person name="Arita M."/>
            <person name="Imose N."/>
            <person name="Musashino K."/>
            <person name="Yuuki H."/>
            <person name="Oshima A."/>
            <person name="Sasaki N."/>
            <person name="Aotsuka S."/>
            <person name="Yoshikawa Y."/>
            <person name="Matsunawa H."/>
            <person name="Ichihara T."/>
            <person name="Shiohata N."/>
            <person name="Sano S."/>
            <person name="Moriya S."/>
            <person name="Momiyama H."/>
            <person name="Satoh N."/>
            <person name="Takami S."/>
            <person name="Terashima Y."/>
            <person name="Suzuki O."/>
            <person name="Nakagawa S."/>
            <person name="Senoh A."/>
            <person name="Mizoguchi H."/>
            <person name="Goto Y."/>
            <person name="Shimizu F."/>
            <person name="Wakebe H."/>
            <person name="Hishigaki H."/>
            <person name="Watanabe T."/>
            <person name="Sugiyama A."/>
            <person name="Takemoto M."/>
            <person name="Kawakami B."/>
            <person name="Yamazaki M."/>
            <person name="Watanabe K."/>
            <person name="Kumagai A."/>
            <person name="Itakura S."/>
            <person name="Fukuzumi Y."/>
            <person name="Fujimori Y."/>
            <person name="Komiyama M."/>
            <person name="Tashiro H."/>
            <person name="Tanigami A."/>
            <person name="Fujiwara T."/>
            <person name="Ono T."/>
            <person name="Yamada K."/>
            <person name="Fujii Y."/>
            <person name="Ozaki K."/>
            <person name="Hirao M."/>
            <person name="Ohmori Y."/>
            <person name="Kawabata A."/>
            <person name="Hikiji T."/>
            <person name="Kobatake N."/>
            <person name="Inagaki H."/>
            <person name="Ikema Y."/>
            <person name="Okamoto S."/>
            <person name="Okitani R."/>
            <person name="Kawakami T."/>
            <person name="Noguchi S."/>
            <person name="Itoh T."/>
            <person name="Shigeta K."/>
            <person name="Senba T."/>
            <person name="Matsumura K."/>
            <person name="Nakajima Y."/>
            <person name="Mizuno T."/>
            <person name="Morinaga M."/>
            <person name="Sasaki M."/>
            <person name="Togashi T."/>
            <person name="Oyama M."/>
            <person name="Hata H."/>
            <person name="Watanabe M."/>
            <person name="Komatsu T."/>
            <person name="Mizushima-Sugano J."/>
            <person name="Satoh T."/>
            <person name="Shirai Y."/>
            <person name="Takahashi Y."/>
            <person name="Nakagawa K."/>
            <person name="Okumura K."/>
            <person name="Nagase T."/>
            <person name="Nomura N."/>
            <person name="Kikuchi H."/>
            <person name="Masuho Y."/>
            <person name="Yamashita R."/>
            <person name="Nakai K."/>
            <person name="Yada T."/>
            <person name="Nakamura Y."/>
            <person name="Ohara O."/>
            <person name="Isogai T."/>
            <person name="Sugano S."/>
        </authorList>
    </citation>
    <scope>NUCLEOTIDE SEQUENCE [LARGE SCALE MRNA]</scope>
    <source>
        <tissue>Testis</tissue>
    </source>
</reference>
<reference key="2">
    <citation type="submission" date="2005-07" db="EMBL/GenBank/DDBJ databases">
        <authorList>
            <person name="Mural R.J."/>
            <person name="Istrail S."/>
            <person name="Sutton G.G."/>
            <person name="Florea L."/>
            <person name="Halpern A.L."/>
            <person name="Mobarry C.M."/>
            <person name="Lippert R."/>
            <person name="Walenz B."/>
            <person name="Shatkay H."/>
            <person name="Dew I."/>
            <person name="Miller J.R."/>
            <person name="Flanigan M.J."/>
            <person name="Edwards N.J."/>
            <person name="Bolanos R."/>
            <person name="Fasulo D."/>
            <person name="Halldorsson B.V."/>
            <person name="Hannenhalli S."/>
            <person name="Turner R."/>
            <person name="Yooseph S."/>
            <person name="Lu F."/>
            <person name="Nusskern D.R."/>
            <person name="Shue B.C."/>
            <person name="Zheng X.H."/>
            <person name="Zhong F."/>
            <person name="Delcher A.L."/>
            <person name="Huson D.H."/>
            <person name="Kravitz S.A."/>
            <person name="Mouchard L."/>
            <person name="Reinert K."/>
            <person name="Remington K.A."/>
            <person name="Clark A.G."/>
            <person name="Waterman M.S."/>
            <person name="Eichler E.E."/>
            <person name="Adams M.D."/>
            <person name="Hunkapiller M.W."/>
            <person name="Myers E.W."/>
            <person name="Venter J.C."/>
        </authorList>
    </citation>
    <scope>NUCLEOTIDE SEQUENCE [LARGE SCALE GENOMIC DNA]</scope>
</reference>
<reference key="3">
    <citation type="journal article" date="2004" name="Genome Res.">
        <title>The status, quality, and expansion of the NIH full-length cDNA project: the Mammalian Gene Collection (MGC).</title>
        <authorList>
            <consortium name="The MGC Project Team"/>
        </authorList>
    </citation>
    <scope>NUCLEOTIDE SEQUENCE [LARGE SCALE MRNA]</scope>
</reference>
<reference key="4">
    <citation type="journal article" date="2001" name="Mech. Dev.">
        <title>Pbx4, a new Pbx family member on mouse chromosome 8 is expressed during spermatogenesis.</title>
        <authorList>
            <person name="Wagner K."/>
            <person name="Mincheva A."/>
            <person name="Korn B."/>
            <person name="Lichter P."/>
            <person name="Poepperl H."/>
        </authorList>
    </citation>
    <scope>NUCLEOTIDE SEQUENCE [MRNA] OF 45-374</scope>
</reference>
<reference key="5">
    <citation type="journal article" date="2006" name="Science">
        <title>The consensus coding sequences of human breast and colorectal cancers.</title>
        <authorList>
            <person name="Sjoeblom T."/>
            <person name="Jones S."/>
            <person name="Wood L.D."/>
            <person name="Parsons D.W."/>
            <person name="Lin J."/>
            <person name="Barber T.D."/>
            <person name="Mandelker D."/>
            <person name="Leary R.J."/>
            <person name="Ptak J."/>
            <person name="Silliman N."/>
            <person name="Szabo S."/>
            <person name="Buckhaults P."/>
            <person name="Farrell C."/>
            <person name="Meeh P."/>
            <person name="Markowitz S.D."/>
            <person name="Willis J."/>
            <person name="Dawson D."/>
            <person name="Willson J.K.V."/>
            <person name="Gazdar A.F."/>
            <person name="Hartigan J."/>
            <person name="Wu L."/>
            <person name="Liu C."/>
            <person name="Parmigiani G."/>
            <person name="Park B.H."/>
            <person name="Bachman K.E."/>
            <person name="Papadopoulos N."/>
            <person name="Vogelstein B."/>
            <person name="Kinzler K.W."/>
            <person name="Velculescu V.E."/>
        </authorList>
    </citation>
    <scope>VARIANT [LARGE SCALE ANALYSIS] MET-283</scope>
</reference>
<sequence length="374" mass="40854">MAAPPRPAPSPPAPRRLDTSDVLQQIMAITDQSLDEAQARKHALNCHRMKPALFSVLCEIKEKTVVSIRGIQDEDPPDAQLLRLDNMLLAEGVCRPEKRGRGGAVARAGTATPGGCPNDNSIEHSDYRAKLSQIRQIYHSELEKYEQACREFTTHVTNLLQEQSRMRPVSPKEIERMVGAIHGKFSAIQMQLKQSTCEAVMTLRSRLLDARRKRRNFSKQATEVLNEYFYSHLNNPYPSEEAKEELARKGGLTISQVSNWFGNKRIRYKKNMGKFQEEATIYTGKTAVDTTEVGVPGNHASCLSTPSSGSSGPFPLPSAGDAFLTLRTLASLQPPPGGGCLQSQAQGSWQGATPQPATASPAGDPGSINSSTSN</sequence>
<feature type="chain" id="PRO_0000049241" description="Pre-B-cell leukemia transcription factor 4">
    <location>
        <begin position="1"/>
        <end position="374"/>
    </location>
</feature>
<feature type="domain" description="PBC" evidence="2">
    <location>
        <begin position="14"/>
        <end position="209"/>
    </location>
</feature>
<feature type="DNA-binding region" description="Homeobox; TALE-type" evidence="1">
    <location>
        <begin position="210"/>
        <end position="272"/>
    </location>
</feature>
<feature type="region of interest" description="PBC-A" evidence="2">
    <location>
        <begin position="21"/>
        <end position="100"/>
    </location>
</feature>
<feature type="region of interest" description="PBC-B" evidence="2">
    <location>
        <begin position="103"/>
        <end position="209"/>
    </location>
</feature>
<feature type="region of interest" description="Disordered" evidence="3">
    <location>
        <begin position="333"/>
        <end position="374"/>
    </location>
</feature>
<feature type="compositionally biased region" description="Polar residues" evidence="3">
    <location>
        <begin position="341"/>
        <end position="358"/>
    </location>
</feature>
<feature type="sequence variant" id="VAR_059355" description="In dbSNP:rs8108180.">
    <original>V</original>
    <variation>I</variation>
    <location>
        <position position="169"/>
    </location>
</feature>
<feature type="sequence variant" id="VAR_059356" description="In dbSNP:rs8108981.">
    <original>M</original>
    <variation>V</variation>
    <location>
        <position position="177"/>
    </location>
</feature>
<feature type="sequence variant" id="VAR_036439" description="In a colorectal cancer sample; somatic mutation; dbSNP:rs376647012." evidence="4">
    <original>T</original>
    <variation>M</variation>
    <location>
        <position position="283"/>
    </location>
</feature>
<feature type="sequence conflict" description="In Ref. 1; BAG53471." evidence="5" ref="1">
    <original>I</original>
    <variation>T</variation>
    <location>
        <position position="368"/>
    </location>
</feature>
<comment type="interaction">
    <interactant intactId="EBI-10302990">
        <id>Q9BYU1</id>
    </interactant>
    <interactant intactId="EBI-8643161">
        <id>Q9NX04</id>
        <label>AIRIM</label>
    </interactant>
    <organismsDiffer>false</organismsDiffer>
    <experiments>5</experiments>
</comment>
<comment type="interaction">
    <interactant intactId="EBI-10302990">
        <id>Q9BYU1</id>
    </interactant>
    <interactant intactId="EBI-10312733">
        <id>Q9NR81</id>
        <label>ARHGEF3</label>
    </interactant>
    <organismsDiffer>false</organismsDiffer>
    <experiments>3</experiments>
</comment>
<comment type="interaction">
    <interactant intactId="EBI-10302990">
        <id>Q9BYU1</id>
    </interactant>
    <interactant intactId="EBI-765407">
        <id>P41182</id>
        <label>BCL6</label>
    </interactant>
    <organismsDiffer>false</organismsDiffer>
    <experiments>3</experiments>
</comment>
<comment type="interaction">
    <interactant intactId="EBI-10302990">
        <id>Q9BYU1</id>
    </interactant>
    <interactant intactId="EBI-10229433">
        <id>Q13515</id>
        <label>BFSP2</label>
    </interactant>
    <organismsDiffer>false</organismsDiffer>
    <experiments>3</experiments>
</comment>
<comment type="interaction">
    <interactant intactId="EBI-10302990">
        <id>Q9BYU1</id>
    </interactant>
    <interactant intactId="EBI-725606">
        <id>Q9NWQ9</id>
        <label>C14orf119</label>
    </interactant>
    <organismsDiffer>false</organismsDiffer>
    <experiments>3</experiments>
</comment>
<comment type="interaction">
    <interactant intactId="EBI-10302990">
        <id>Q9BYU1</id>
    </interactant>
    <interactant intactId="EBI-350645">
        <id>Q9NUG4</id>
        <label>CCM2L</label>
    </interactant>
    <organismsDiffer>false</organismsDiffer>
    <experiments>5</experiments>
</comment>
<comment type="interaction">
    <interactant intactId="EBI-10302990">
        <id>Q9BYU1</id>
    </interactant>
    <interactant intactId="EBI-711290">
        <id>P42773</id>
        <label>CDKN2C</label>
    </interactant>
    <organismsDiffer>false</organismsDiffer>
    <experiments>3</experiments>
</comment>
<comment type="interaction">
    <interactant intactId="EBI-10302990">
        <id>Q9BYU1</id>
    </interactant>
    <interactant intactId="EBI-2321769">
        <id>Q9Y6H1</id>
        <label>CHCHD2</label>
    </interactant>
    <organismsDiffer>false</organismsDiffer>
    <experiments>3</experiments>
</comment>
<comment type="interaction">
    <interactant intactId="EBI-10302990">
        <id>Q9BYU1</id>
    </interactant>
    <interactant intactId="EBI-11980535">
        <id>P51800-3</id>
        <label>CLCNKA</label>
    </interactant>
    <organismsDiffer>false</organismsDiffer>
    <experiments>3</experiments>
</comment>
<comment type="interaction">
    <interactant intactId="EBI-10302990">
        <id>Q9BYU1</id>
    </interactant>
    <interactant intactId="EBI-12012272">
        <id>Q9UBL6-2</id>
        <label>CPNE7</label>
    </interactant>
    <organismsDiffer>false</organismsDiffer>
    <experiments>3</experiments>
</comment>
<comment type="interaction">
    <interactant intactId="EBI-10302990">
        <id>Q9BYU1</id>
    </interactant>
    <interactant intactId="EBI-750300">
        <id>Q01658</id>
        <label>DR1</label>
    </interactant>
    <organismsDiffer>false</organismsDiffer>
    <experiments>3</experiments>
</comment>
<comment type="interaction">
    <interactant intactId="EBI-10302990">
        <id>Q9BYU1</id>
    </interactant>
    <interactant intactId="EBI-750700">
        <id>Q8N9N8</id>
        <label>EIF1AD</label>
    </interactant>
    <organismsDiffer>false</organismsDiffer>
    <experiments>3</experiments>
</comment>
<comment type="interaction">
    <interactant intactId="EBI-10302990">
        <id>Q9BYU1</id>
    </interactant>
    <interactant intactId="EBI-711990">
        <id>O00303</id>
        <label>EIF3F</label>
    </interactant>
    <organismsDiffer>false</organismsDiffer>
    <experiments>3</experiments>
</comment>
<comment type="interaction">
    <interactant intactId="EBI-10302990">
        <id>Q9BYU1</id>
    </interactant>
    <interactant intactId="EBI-742102">
        <id>Q8IYI6</id>
        <label>EXOC8</label>
    </interactant>
    <organismsDiffer>false</organismsDiffer>
    <experiments>3</experiments>
</comment>
<comment type="interaction">
    <interactant intactId="EBI-10302990">
        <id>Q9BYU1</id>
    </interactant>
    <interactant intactId="EBI-400434">
        <id>P35637</id>
        <label>FUS</label>
    </interactant>
    <organismsDiffer>false</organismsDiffer>
    <experiments>3</experiments>
</comment>
<comment type="interaction">
    <interactant intactId="EBI-10302990">
        <id>Q9BYU1</id>
    </interactant>
    <interactant intactId="EBI-372506">
        <id>Q8TAE8</id>
        <label>GADD45GIP1</label>
    </interactant>
    <organismsDiffer>false</organismsDiffer>
    <experiments>3</experiments>
</comment>
<comment type="interaction">
    <interactant intactId="EBI-10302990">
        <id>Q9BYU1</id>
    </interactant>
    <interactant intactId="EBI-744104">
        <id>P55040</id>
        <label>GEM</label>
    </interactant>
    <organismsDiffer>false</organismsDiffer>
    <experiments>3</experiments>
</comment>
<comment type="interaction">
    <interactant intactId="EBI-10302990">
        <id>Q9BYU1</id>
    </interactant>
    <interactant intactId="EBI-747500">
        <id>Q9BRT9</id>
        <label>GINS4</label>
    </interactant>
    <organismsDiffer>false</organismsDiffer>
    <experiments>3</experiments>
</comment>
<comment type="interaction">
    <interactant intactId="EBI-10302990">
        <id>Q9BYU1</id>
    </interactant>
    <interactant intactId="EBI-751540">
        <id>O95872</id>
        <label>GPANK1</label>
    </interactant>
    <organismsDiffer>false</organismsDiffer>
    <experiments>3</experiments>
</comment>
<comment type="interaction">
    <interactant intactId="EBI-10302990">
        <id>Q9BYU1</id>
    </interactant>
    <interactant intactId="EBI-389564">
        <id>Q00403</id>
        <label>GTF2B</label>
    </interactant>
    <organismsDiffer>false</organismsDiffer>
    <experiments>3</experiments>
</comment>
<comment type="interaction">
    <interactant intactId="EBI-10302990">
        <id>Q9BYU1</id>
    </interactant>
    <interactant intactId="EBI-1054873">
        <id>Q9Y5Q9</id>
        <label>GTF3C3</label>
    </interactant>
    <organismsDiffer>false</organismsDiffer>
    <experiments>3</experiments>
</comment>
<comment type="interaction">
    <interactant intactId="EBI-10302990">
        <id>Q9BYU1</id>
    </interactant>
    <interactant intactId="EBI-5329558">
        <id>P14652</id>
        <label>HOXB2</label>
    </interactant>
    <organismsDiffer>false</organismsDiffer>
    <experiments>3</experiments>
</comment>
<comment type="interaction">
    <interactant intactId="EBI-10302990">
        <id>Q9BYU1</id>
    </interactant>
    <interactant intactId="EBI-3893317">
        <id>P09067</id>
        <label>HOXB5</label>
    </interactant>
    <organismsDiffer>false</organismsDiffer>
    <experiments>3</experiments>
</comment>
<comment type="interaction">
    <interactant intactId="EBI-10302990">
        <id>Q9BYU1</id>
    </interactant>
    <interactant intactId="EBI-11955357">
        <id>Q00444</id>
        <label>HOXC5</label>
    </interactant>
    <organismsDiffer>false</organismsDiffer>
    <experiments>3</experiments>
</comment>
<comment type="interaction">
    <interactant intactId="EBI-10302990">
        <id>Q9BYU1</id>
    </interactant>
    <interactant intactId="EBI-1752118">
        <id>P31273</id>
        <label>HOXC8</label>
    </interactant>
    <organismsDiffer>false</organismsDiffer>
    <experiments>3</experiments>
</comment>
<comment type="interaction">
    <interactant intactId="EBI-10302990">
        <id>Q9BYU1</id>
    </interactant>
    <interactant intactId="EBI-12822515">
        <id>P09016</id>
        <label>HOXD4</label>
    </interactant>
    <organismsDiffer>false</organismsDiffer>
    <experiments>3</experiments>
</comment>
<comment type="interaction">
    <interactant intactId="EBI-10302990">
        <id>Q9BYU1</id>
    </interactant>
    <interactant intactId="EBI-2685549">
        <id>C9JCN9</id>
        <label>HSBP1L1</label>
    </interactant>
    <organismsDiffer>false</organismsDiffer>
    <experiments>3</experiments>
</comment>
<comment type="interaction">
    <interactant intactId="EBI-10302990">
        <id>Q9BYU1</id>
    </interactant>
    <interactant intactId="EBI-466029">
        <id>P42858</id>
        <label>HTT</label>
    </interactant>
    <organismsDiffer>false</organismsDiffer>
    <experiments>3</experiments>
</comment>
<comment type="interaction">
    <interactant intactId="EBI-10302990">
        <id>Q9BYU1</id>
    </interactant>
    <interactant intactId="EBI-9091197">
        <id>Q8IY31-3</id>
        <label>IFT20</label>
    </interactant>
    <organismsDiffer>false</organismsDiffer>
    <experiments>3</experiments>
</comment>
<comment type="interaction">
    <interactant intactId="EBI-10302990">
        <id>Q9BYU1</id>
    </interactant>
    <interactant intactId="EBI-747310">
        <id>O94829</id>
        <label>IPO13</label>
    </interactant>
    <organismsDiffer>false</organismsDiffer>
    <experiments>8</experiments>
</comment>
<comment type="interaction">
    <interactant intactId="EBI-10302990">
        <id>Q9BYU1</id>
    </interactant>
    <interactant intactId="EBI-710124">
        <id>O60341</id>
        <label>KDM1A</label>
    </interactant>
    <organismsDiffer>false</organismsDiffer>
    <experiments>3</experiments>
</comment>
<comment type="interaction">
    <interactant intactId="EBI-10302990">
        <id>Q9BYU1</id>
    </interactant>
    <interactant intactId="EBI-6426443">
        <id>Q2WGJ6</id>
        <label>KLHL38</label>
    </interactant>
    <organismsDiffer>false</organismsDiffer>
    <experiments>3</experiments>
</comment>
<comment type="interaction">
    <interactant intactId="EBI-10302990">
        <id>Q9BYU1</id>
    </interactant>
    <interactant intactId="EBI-11959475">
        <id>P25791-3</id>
        <label>LMO2</label>
    </interactant>
    <organismsDiffer>false</organismsDiffer>
    <experiments>3</experiments>
</comment>
<comment type="interaction">
    <interactant intactId="EBI-10302990">
        <id>Q9BYU1</id>
    </interactant>
    <interactant intactId="EBI-746778">
        <id>Q96A72</id>
        <label>MAGOHB</label>
    </interactant>
    <organismsDiffer>false</organismsDiffer>
    <experiments>3</experiments>
</comment>
<comment type="interaction">
    <interactant intactId="EBI-10302990">
        <id>Q9BYU1</id>
    </interactant>
    <interactant intactId="EBI-713568">
        <id>P45984</id>
        <label>MAPK9</label>
    </interactant>
    <organismsDiffer>false</organismsDiffer>
    <experiments>3</experiments>
</comment>
<comment type="interaction">
    <interactant intactId="EBI-10302990">
        <id>Q9BYU1</id>
    </interactant>
    <interactant intactId="EBI-11978579">
        <id>O95983-2</id>
        <label>MBD3</label>
    </interactant>
    <organismsDiffer>false</organismsDiffer>
    <experiments>3</experiments>
</comment>
<comment type="interaction">
    <interactant intactId="EBI-10302990">
        <id>Q9BYU1</id>
    </interactant>
    <interactant intactId="EBI-8025850">
        <id>O14770-4</id>
        <label>MEIS2</label>
    </interactant>
    <organismsDiffer>false</organismsDiffer>
    <experiments>6</experiments>
</comment>
<comment type="interaction">
    <interactant intactId="EBI-10302990">
        <id>Q9BYU1</id>
    </interactant>
    <interactant intactId="EBI-2548751">
        <id>Q8TD10</id>
        <label>MIPOL1</label>
    </interactant>
    <organismsDiffer>false</organismsDiffer>
    <experiments>3</experiments>
</comment>
<comment type="interaction">
    <interactant intactId="EBI-10302990">
        <id>Q9BYU1</id>
    </interactant>
    <interactant intactId="EBI-713635">
        <id>O43639</id>
        <label>NCK2</label>
    </interactant>
    <organismsDiffer>false</organismsDiffer>
    <experiments>3</experiments>
</comment>
<comment type="interaction">
    <interactant intactId="EBI-10302990">
        <id>Q9BYU1</id>
    </interactant>
    <interactant intactId="EBI-11750983">
        <id>Q9HC98-4</id>
        <label>NEK6</label>
    </interactant>
    <organismsDiffer>false</organismsDiffer>
    <experiments>3</experiments>
</comment>
<comment type="interaction">
    <interactant intactId="EBI-10302990">
        <id>Q9BYU1</id>
    </interactant>
    <interactant intactId="EBI-591778">
        <id>P61970</id>
        <label>NUTF2</label>
    </interactant>
    <organismsDiffer>false</organismsDiffer>
    <experiments>3</experiments>
</comment>
<comment type="interaction">
    <interactant intactId="EBI-10302990">
        <id>Q9BYU1</id>
    </interactant>
    <interactant intactId="EBI-742503">
        <id>Q9UNF0</id>
        <label>PACSIN2</label>
    </interactant>
    <organismsDiffer>false</organismsDiffer>
    <experiments>3</experiments>
</comment>
<comment type="interaction">
    <interactant intactId="EBI-10302990">
        <id>Q9BYU1</id>
    </interactant>
    <interactant intactId="EBI-79165">
        <id>Q9NRD5</id>
        <label>PICK1</label>
    </interactant>
    <organismsDiffer>false</organismsDiffer>
    <experiments>3</experiments>
</comment>
<comment type="interaction">
    <interactant intactId="EBI-10302990">
        <id>Q9BYU1</id>
    </interactant>
    <interactant intactId="EBI-10232538">
        <id>Q8WWB5</id>
        <label>PIH1D2</label>
    </interactant>
    <organismsDiffer>false</organismsDiffer>
    <experiments>6</experiments>
</comment>
<comment type="interaction">
    <interactant intactId="EBI-10302990">
        <id>Q9BYU1</id>
    </interactant>
    <interactant intactId="EBI-79893">
        <id>Q92569</id>
        <label>PIK3R3</label>
    </interactant>
    <organismsDiffer>false</organismsDiffer>
    <experiments>3</experiments>
</comment>
<comment type="interaction">
    <interactant intactId="EBI-10302990">
        <id>Q9BYU1</id>
    </interactant>
    <interactant intactId="EBI-1373569">
        <id>P55347</id>
        <label>PKNOX1</label>
    </interactant>
    <organismsDiffer>false</organismsDiffer>
    <experiments>7</experiments>
</comment>
<comment type="interaction">
    <interactant intactId="EBI-10302990">
        <id>Q9BYU1</id>
    </interactant>
    <interactant intactId="EBI-2692890">
        <id>Q96KN3</id>
        <label>PKNOX2</label>
    </interactant>
    <organismsDiffer>false</organismsDiffer>
    <experiments>4</experiments>
</comment>
<comment type="interaction">
    <interactant intactId="EBI-10302990">
        <id>Q9BYU1</id>
    </interactant>
    <interactant intactId="EBI-368321">
        <id>O60437</id>
        <label>PPL</label>
    </interactant>
    <organismsDiffer>false</organismsDiffer>
    <experiments>3</experiments>
</comment>
<comment type="interaction">
    <interactant intactId="EBI-10302990">
        <id>Q9BYU1</id>
    </interactant>
    <interactant intactId="EBI-398523">
        <id>P62877</id>
        <label>RBX1</label>
    </interactant>
    <organismsDiffer>false</organismsDiffer>
    <experiments>3</experiments>
</comment>
<comment type="interaction">
    <interactant intactId="EBI-10302990">
        <id>Q9BYU1</id>
    </interactant>
    <interactant intactId="EBI-10226430">
        <id>Q0D2K3</id>
        <label>RIPPLY1</label>
    </interactant>
    <organismsDiffer>false</organismsDiffer>
    <experiments>3</experiments>
</comment>
<comment type="interaction">
    <interactant intactId="EBI-10302990">
        <id>Q9BYU1</id>
    </interactant>
    <interactant intactId="EBI-10246897">
        <id>Q5TAB7</id>
        <label>RIPPLY2</label>
    </interactant>
    <organismsDiffer>false</organismsDiffer>
    <experiments>5</experiments>
</comment>
<comment type="interaction">
    <interactant intactId="EBI-10302990">
        <id>Q9BYU1</id>
    </interactant>
    <interactant intactId="EBI-748391">
        <id>Q9BWG6</id>
        <label>SCNM1</label>
    </interactant>
    <organismsDiffer>false</organismsDiffer>
    <experiments>3</experiments>
</comment>
<comment type="interaction">
    <interactant intactId="EBI-10302990">
        <id>Q9BYU1</id>
    </interactant>
    <interactant intactId="EBI-748601">
        <id>Q9UHV2</id>
        <label>SERTAD1</label>
    </interactant>
    <organismsDiffer>false</organismsDiffer>
    <experiments>3</experiments>
</comment>
<comment type="interaction">
    <interactant intactId="EBI-10302990">
        <id>Q9BYU1</id>
    </interactant>
    <interactant intactId="EBI-358489">
        <id>Q96GM5</id>
        <label>SMARCD1</label>
    </interactant>
    <organismsDiffer>false</organismsDiffer>
    <experiments>3</experiments>
</comment>
<comment type="interaction">
    <interactant intactId="EBI-10302990">
        <id>Q9BYU1</id>
    </interactant>
    <interactant intactId="EBI-990792">
        <id>P00441</id>
        <label>SOD1</label>
    </interactant>
    <organismsDiffer>false</organismsDiffer>
    <experiments>3</experiments>
</comment>
<comment type="interaction">
    <interactant intactId="EBI-10302990">
        <id>Q9BYU1</id>
    </interactant>
    <interactant intactId="EBI-12023934">
        <id>Q5MJ10</id>
        <label>SPANXN2</label>
    </interactant>
    <organismsDiffer>false</organismsDiffer>
    <experiments>3</experiments>
</comment>
<comment type="interaction">
    <interactant intactId="EBI-10302990">
        <id>Q9BYU1</id>
    </interactant>
    <interactant intactId="EBI-12037215">
        <id>Q5MJ09</id>
        <label>SPANXN3</label>
    </interactant>
    <organismsDiffer>false</organismsDiffer>
    <experiments>3</experiments>
</comment>
<comment type="interaction">
    <interactant intactId="EBI-10302990">
        <id>Q9BYU1</id>
    </interactant>
    <interactant intactId="EBI-742688">
        <id>Q9NZD8</id>
        <label>SPG21</label>
    </interactant>
    <organismsDiffer>false</organismsDiffer>
    <experiments>3</experiments>
</comment>
<comment type="interaction">
    <interactant intactId="EBI-10302990">
        <id>Q9BYU1</id>
    </interactant>
    <interactant intactId="EBI-372899">
        <id>Q13148</id>
        <label>TARDBP</label>
    </interactant>
    <organismsDiffer>false</organismsDiffer>
    <experiments>6</experiments>
</comment>
<comment type="interaction">
    <interactant intactId="EBI-10302990">
        <id>Q9BYU1</id>
    </interactant>
    <interactant intactId="EBI-1105213">
        <id>Q9UBB9</id>
        <label>TFIP11</label>
    </interactant>
    <organismsDiffer>false</organismsDiffer>
    <experiments>9</experiments>
</comment>
<comment type="interaction">
    <interactant intactId="EBI-10302990">
        <id>Q9BYU1</id>
    </interactant>
    <interactant intactId="EBI-725997">
        <id>Q8WV44</id>
        <label>TRIM41</label>
    </interactant>
    <organismsDiffer>false</organismsDiffer>
    <experiments>3</experiments>
</comment>
<comment type="interaction">
    <interactant intactId="EBI-10302990">
        <id>Q9BYU1</id>
    </interactant>
    <interactant intactId="EBI-372432">
        <id>Q8WW01</id>
        <label>TSEN15</label>
    </interactant>
    <organismsDiffer>false</organismsDiffer>
    <experiments>3</experiments>
</comment>
<comment type="interaction">
    <interactant intactId="EBI-10302990">
        <id>Q9BYU1</id>
    </interactant>
    <interactant intactId="EBI-3918381">
        <id>Q96PN8</id>
        <label>TSSK3</label>
    </interactant>
    <organismsDiffer>false</organismsDiffer>
    <experiments>3</experiments>
</comment>
<comment type="interaction">
    <interactant intactId="EBI-10302990">
        <id>Q9BYU1</id>
    </interactant>
    <interactant intactId="EBI-707554">
        <id>O14530</id>
        <label>TXNDC9</label>
    </interactant>
    <organismsDiffer>false</organismsDiffer>
    <experiments>5</experiments>
</comment>
<comment type="interaction">
    <interactant intactId="EBI-10302990">
        <id>Q9BYU1</id>
    </interactant>
    <interactant intactId="EBI-17208936">
        <id>P0CB47</id>
        <label>UBTFL1</label>
    </interactant>
    <organismsDiffer>false</organismsDiffer>
    <experiments>3</experiments>
</comment>
<comment type="interaction">
    <interactant intactId="EBI-10302990">
        <id>Q9BYU1</id>
    </interactant>
    <interactant intactId="EBI-739895">
        <id>Q8N6Y0</id>
        <label>USHBP1</label>
    </interactant>
    <organismsDiffer>false</organismsDiffer>
    <experiments>3</experiments>
</comment>
<comment type="interaction">
    <interactant intactId="EBI-10302990">
        <id>Q9BYU1</id>
    </interactant>
    <interactant intactId="EBI-2511991">
        <id>Q9Y2K6</id>
        <label>USP20</label>
    </interactant>
    <organismsDiffer>false</organismsDiffer>
    <experiments>3</experiments>
</comment>
<comment type="interaction">
    <interactant intactId="EBI-10302990">
        <id>Q9BYU1</id>
    </interactant>
    <interactant intactId="EBI-12040603">
        <id>Q9NZC7-5</id>
        <label>WWOX</label>
    </interactant>
    <organismsDiffer>false</organismsDiffer>
    <experiments>3</experiments>
</comment>
<comment type="interaction">
    <interactant intactId="EBI-10302990">
        <id>Q9BYU1</id>
    </interactant>
    <interactant intactId="EBI-373456">
        <id>Q9Y3S2</id>
        <label>ZNF330</label>
    </interactant>
    <organismsDiffer>false</organismsDiffer>
    <experiments>3</experiments>
</comment>
<comment type="interaction">
    <interactant intactId="EBI-10302990">
        <id>Q9BYU1</id>
    </interactant>
    <interactant intactId="EBI-10211777">
        <id>A0A384ME25</id>
    </interactant>
    <organismsDiffer>false</organismsDiffer>
    <experiments>3</experiments>
</comment>
<comment type="subcellular location">
    <subcellularLocation>
        <location evidence="1">Nucleus</location>
    </subcellularLocation>
</comment>
<comment type="similarity">
    <text evidence="5">Belongs to the TALE/PBX homeobox family.</text>
</comment>
<comment type="sequence caution" evidence="5">
    <conflict type="frameshift">
        <sequence resource="EMBL" id="BC033067"/>
    </conflict>
</comment>
<proteinExistence type="evidence at protein level"/>